<comment type="function">
    <text evidence="2 3 5">Involved in cation homeostasis and in the regulation of the cation stress signaling cascades. Also involved in bipolar budding.</text>
</comment>
<comment type="subcellular location">
    <subcellularLocation>
        <location>Cytoplasm</location>
    </subcellularLocation>
    <subcellularLocation>
        <location>Nucleus</location>
    </subcellularLocation>
    <text>The nuclear location is modulated by calcineurin.</text>
</comment>
<comment type="miscellaneous">
    <text evidence="4">Present with 846 molecules/cell in log phase SD medium.</text>
</comment>
<protein>
    <recommendedName>
        <fullName>Protein ATC1/LIC4</fullName>
    </recommendedName>
    <alternativeName>
        <fullName>AIP3 complex protein 1</fullName>
    </alternativeName>
    <alternativeName>
        <fullName>Lithium comvertas protein 4</fullName>
    </alternativeName>
</protein>
<dbReference type="EMBL" id="Z46727">
    <property type="protein sequence ID" value="CAA86691.1"/>
    <property type="molecule type" value="Genomic_DNA"/>
</dbReference>
<dbReference type="EMBL" id="AY558576">
    <property type="protein sequence ID" value="AAS56902.1"/>
    <property type="molecule type" value="Genomic_DNA"/>
</dbReference>
<dbReference type="EMBL" id="BK006938">
    <property type="protein sequence ID" value="DAA12028.1"/>
    <property type="molecule type" value="Genomic_DNA"/>
</dbReference>
<dbReference type="PIR" id="S49781">
    <property type="entry name" value="S49781"/>
</dbReference>
<dbReference type="RefSeq" id="NP_010470.1">
    <property type="nucleotide sequence ID" value="NM_001180492.1"/>
</dbReference>
<dbReference type="SMR" id="Q04005"/>
<dbReference type="BioGRID" id="32238">
    <property type="interactions" value="134"/>
</dbReference>
<dbReference type="DIP" id="DIP-832N"/>
<dbReference type="FunCoup" id="Q04005">
    <property type="interactions" value="128"/>
</dbReference>
<dbReference type="IntAct" id="Q04005">
    <property type="interactions" value="4"/>
</dbReference>
<dbReference type="STRING" id="4932.YDR184C"/>
<dbReference type="GlyGen" id="Q04005">
    <property type="glycosylation" value="2 sites, 1 O-linked glycan (2 sites)"/>
</dbReference>
<dbReference type="iPTMnet" id="Q04005"/>
<dbReference type="PaxDb" id="4932-YDR184C"/>
<dbReference type="PeptideAtlas" id="Q04005"/>
<dbReference type="EnsemblFungi" id="YDR184C_mRNA">
    <property type="protein sequence ID" value="YDR184C"/>
    <property type="gene ID" value="YDR184C"/>
</dbReference>
<dbReference type="GeneID" id="851765"/>
<dbReference type="KEGG" id="sce:YDR184C"/>
<dbReference type="AGR" id="SGD:S000002592"/>
<dbReference type="SGD" id="S000002592">
    <property type="gene designation" value="ATC1"/>
</dbReference>
<dbReference type="VEuPathDB" id="FungiDB:YDR184C"/>
<dbReference type="eggNOG" id="ENOG502S4IW">
    <property type="taxonomic scope" value="Eukaryota"/>
</dbReference>
<dbReference type="HOGENOM" id="CLU_039078_0_0_1"/>
<dbReference type="InParanoid" id="Q04005"/>
<dbReference type="OMA" id="YARSCVE"/>
<dbReference type="OrthoDB" id="4070577at2759"/>
<dbReference type="BioCyc" id="YEAST:G3O-29773-MONOMER"/>
<dbReference type="BioGRID-ORCS" id="851765">
    <property type="hits" value="2 hits in 10 CRISPR screens"/>
</dbReference>
<dbReference type="PRO" id="PR:Q04005"/>
<dbReference type="Proteomes" id="UP000002311">
    <property type="component" value="Chromosome IV"/>
</dbReference>
<dbReference type="RNAct" id="Q04005">
    <property type="molecule type" value="protein"/>
</dbReference>
<dbReference type="GO" id="GO:0005737">
    <property type="term" value="C:cytoplasm"/>
    <property type="evidence" value="ECO:0007005"/>
    <property type="project" value="SGD"/>
</dbReference>
<dbReference type="GO" id="GO:0005634">
    <property type="term" value="C:nucleus"/>
    <property type="evidence" value="ECO:0000314"/>
    <property type="project" value="SGD"/>
</dbReference>
<dbReference type="GO" id="GO:0007121">
    <property type="term" value="P:bipolar cellular bud site selection"/>
    <property type="evidence" value="ECO:0000315"/>
    <property type="project" value="SGD"/>
</dbReference>
<dbReference type="GO" id="GO:0030003">
    <property type="term" value="P:intracellular monoatomic cation homeostasis"/>
    <property type="evidence" value="ECO:0000315"/>
    <property type="project" value="SGD"/>
</dbReference>
<accession>Q04005</accession>
<accession>D6VSG8</accession>
<accession>Q6Q540</accession>
<name>LIC4_YEAST</name>
<proteinExistence type="evidence at protein level"/>
<sequence length="294" mass="33114">MNTNQSNPNTDLTDDANIEHTLHRLLTQANNHFDDTVKIDGQSLDLGKDLEQVMMDNLDCTDIFDSDIASQKHLTLESLFNDEHNTDSSTLLEMQRSANDSLVGIDLDRHKKGYTGKASLDKSTNQNNVHKPDKEQKNYKIDKPTIKKKKSLLKTTNEPMLSPASLSPSSSLASSDANESHLKIESMITDITSKIDSARQDIVSATKPAKFTNEFTISQISEMKARIINTHKLLLNFNFIKEGYARSCIQLKKSMDSLKDSEIHRAHLLVENDDLKQQILELTQKLNEKSSKES</sequence>
<evidence type="ECO:0000256" key="1">
    <source>
        <dbReference type="SAM" id="MobiDB-lite"/>
    </source>
</evidence>
<evidence type="ECO:0000269" key="2">
    <source>
    </source>
</evidence>
<evidence type="ECO:0000269" key="3">
    <source>
    </source>
</evidence>
<evidence type="ECO:0000269" key="4">
    <source>
    </source>
</evidence>
<evidence type="ECO:0000269" key="5">
    <source>
    </source>
</evidence>
<evidence type="ECO:0000305" key="6"/>
<feature type="chain" id="PRO_0000076239" description="Protein ATC1/LIC4">
    <location>
        <begin position="1"/>
        <end position="294"/>
    </location>
</feature>
<feature type="region of interest" description="Disordered" evidence="1">
    <location>
        <begin position="114"/>
        <end position="178"/>
    </location>
</feature>
<feature type="compositionally biased region" description="Basic and acidic residues" evidence="1">
    <location>
        <begin position="130"/>
        <end position="145"/>
    </location>
</feature>
<feature type="compositionally biased region" description="Low complexity" evidence="1">
    <location>
        <begin position="153"/>
        <end position="175"/>
    </location>
</feature>
<feature type="sequence conflict" description="In Ref. 3; AAS56902." evidence="6" ref="3">
    <original>S</original>
    <variation>P</variation>
    <location>
        <position position="204"/>
    </location>
</feature>
<reference key="1">
    <citation type="journal article" date="1997" name="Nature">
        <title>The nucleotide sequence of Saccharomyces cerevisiae chromosome IV.</title>
        <authorList>
            <person name="Jacq C."/>
            <person name="Alt-Moerbe J."/>
            <person name="Andre B."/>
            <person name="Arnold W."/>
            <person name="Bahr A."/>
            <person name="Ballesta J.P.G."/>
            <person name="Bargues M."/>
            <person name="Baron L."/>
            <person name="Becker A."/>
            <person name="Biteau N."/>
            <person name="Bloecker H."/>
            <person name="Blugeon C."/>
            <person name="Boskovic J."/>
            <person name="Brandt P."/>
            <person name="Brueckner M."/>
            <person name="Buitrago M.J."/>
            <person name="Coster F."/>
            <person name="Delaveau T."/>
            <person name="del Rey F."/>
            <person name="Dujon B."/>
            <person name="Eide L.G."/>
            <person name="Garcia-Cantalejo J.M."/>
            <person name="Goffeau A."/>
            <person name="Gomez-Peris A."/>
            <person name="Granotier C."/>
            <person name="Hanemann V."/>
            <person name="Hankeln T."/>
            <person name="Hoheisel J.D."/>
            <person name="Jaeger W."/>
            <person name="Jimenez A."/>
            <person name="Jonniaux J.-L."/>
            <person name="Kraemer C."/>
            <person name="Kuester H."/>
            <person name="Laamanen P."/>
            <person name="Legros Y."/>
            <person name="Louis E.J."/>
            <person name="Moeller-Rieker S."/>
            <person name="Monnet A."/>
            <person name="Moro M."/>
            <person name="Mueller-Auer S."/>
            <person name="Nussbaumer B."/>
            <person name="Paricio N."/>
            <person name="Paulin L."/>
            <person name="Perea J."/>
            <person name="Perez-Alonso M."/>
            <person name="Perez-Ortin J.E."/>
            <person name="Pohl T.M."/>
            <person name="Prydz H."/>
            <person name="Purnelle B."/>
            <person name="Rasmussen S.W."/>
            <person name="Remacha M.A."/>
            <person name="Revuelta J.L."/>
            <person name="Rieger M."/>
            <person name="Salom D."/>
            <person name="Saluz H.P."/>
            <person name="Saiz J.E."/>
            <person name="Saren A.-M."/>
            <person name="Schaefer M."/>
            <person name="Scharfe M."/>
            <person name="Schmidt E.R."/>
            <person name="Schneider C."/>
            <person name="Scholler P."/>
            <person name="Schwarz S."/>
            <person name="Soler-Mira A."/>
            <person name="Urrestarazu L.A."/>
            <person name="Verhasselt P."/>
            <person name="Vissers S."/>
            <person name="Voet M."/>
            <person name="Volckaert G."/>
            <person name="Wagner G."/>
            <person name="Wambutt R."/>
            <person name="Wedler E."/>
            <person name="Wedler H."/>
            <person name="Woelfl S."/>
            <person name="Harris D.E."/>
            <person name="Bowman S."/>
            <person name="Brown D."/>
            <person name="Churcher C.M."/>
            <person name="Connor R."/>
            <person name="Dedman K."/>
            <person name="Gentles S."/>
            <person name="Hamlin N."/>
            <person name="Hunt S."/>
            <person name="Jones L."/>
            <person name="McDonald S."/>
            <person name="Murphy L.D."/>
            <person name="Niblett D."/>
            <person name="Odell C."/>
            <person name="Oliver K."/>
            <person name="Rajandream M.A."/>
            <person name="Richards C."/>
            <person name="Shore L."/>
            <person name="Walsh S.V."/>
            <person name="Barrell B.G."/>
            <person name="Dietrich F.S."/>
            <person name="Mulligan J.T."/>
            <person name="Allen E."/>
            <person name="Araujo R."/>
            <person name="Aviles E."/>
            <person name="Berno A."/>
            <person name="Carpenter J."/>
            <person name="Chen E."/>
            <person name="Cherry J.M."/>
            <person name="Chung E."/>
            <person name="Duncan M."/>
            <person name="Hunicke-Smith S."/>
            <person name="Hyman R.W."/>
            <person name="Komp C."/>
            <person name="Lashkari D."/>
            <person name="Lew H."/>
            <person name="Lin D."/>
            <person name="Mosedale D."/>
            <person name="Nakahara K."/>
            <person name="Namath A."/>
            <person name="Oefner P."/>
            <person name="Oh C."/>
            <person name="Petel F.X."/>
            <person name="Roberts D."/>
            <person name="Schramm S."/>
            <person name="Schroeder M."/>
            <person name="Shogren T."/>
            <person name="Shroff N."/>
            <person name="Winant A."/>
            <person name="Yelton M.A."/>
            <person name="Botstein D."/>
            <person name="Davis R.W."/>
            <person name="Johnston M."/>
            <person name="Andrews S."/>
            <person name="Brinkman R."/>
            <person name="Cooper J."/>
            <person name="Ding H."/>
            <person name="Du Z."/>
            <person name="Favello A."/>
            <person name="Fulton L."/>
            <person name="Gattung S."/>
            <person name="Greco T."/>
            <person name="Hallsworth K."/>
            <person name="Hawkins J."/>
            <person name="Hillier L.W."/>
            <person name="Jier M."/>
            <person name="Johnson D."/>
            <person name="Johnston L."/>
            <person name="Kirsten J."/>
            <person name="Kucaba T."/>
            <person name="Langston Y."/>
            <person name="Latreille P."/>
            <person name="Le T."/>
            <person name="Mardis E."/>
            <person name="Menezes S."/>
            <person name="Miller N."/>
            <person name="Nhan M."/>
            <person name="Pauley A."/>
            <person name="Peluso D."/>
            <person name="Rifkin L."/>
            <person name="Riles L."/>
            <person name="Taich A."/>
            <person name="Trevaskis E."/>
            <person name="Vignati D."/>
            <person name="Wilcox L."/>
            <person name="Wohldman P."/>
            <person name="Vaudin M."/>
            <person name="Wilson R."/>
            <person name="Waterston R."/>
            <person name="Albermann K."/>
            <person name="Hani J."/>
            <person name="Heumann K."/>
            <person name="Kleine K."/>
            <person name="Mewes H.-W."/>
            <person name="Zollner A."/>
            <person name="Zaccaria P."/>
        </authorList>
    </citation>
    <scope>NUCLEOTIDE SEQUENCE [LARGE SCALE GENOMIC DNA]</scope>
    <source>
        <strain>ATCC 204508 / S288c</strain>
    </source>
</reference>
<reference key="2">
    <citation type="journal article" date="2014" name="G3 (Bethesda)">
        <title>The reference genome sequence of Saccharomyces cerevisiae: Then and now.</title>
        <authorList>
            <person name="Engel S.R."/>
            <person name="Dietrich F.S."/>
            <person name="Fisk D.G."/>
            <person name="Binkley G."/>
            <person name="Balakrishnan R."/>
            <person name="Costanzo M.C."/>
            <person name="Dwight S.S."/>
            <person name="Hitz B.C."/>
            <person name="Karra K."/>
            <person name="Nash R.S."/>
            <person name="Weng S."/>
            <person name="Wong E.D."/>
            <person name="Lloyd P."/>
            <person name="Skrzypek M.S."/>
            <person name="Miyasato S.R."/>
            <person name="Simison M."/>
            <person name="Cherry J.M."/>
        </authorList>
    </citation>
    <scope>GENOME REANNOTATION</scope>
    <source>
        <strain>ATCC 204508 / S288c</strain>
    </source>
</reference>
<reference key="3">
    <citation type="journal article" date="2007" name="Genome Res.">
        <title>Approaching a complete repository of sequence-verified protein-encoding clones for Saccharomyces cerevisiae.</title>
        <authorList>
            <person name="Hu Y."/>
            <person name="Rolfs A."/>
            <person name="Bhullar B."/>
            <person name="Murthy T.V.S."/>
            <person name="Zhu C."/>
            <person name="Berger M.F."/>
            <person name="Camargo A.A."/>
            <person name="Kelley F."/>
            <person name="McCarron S."/>
            <person name="Jepson D."/>
            <person name="Richardson A."/>
            <person name="Raphael J."/>
            <person name="Moreira D."/>
            <person name="Taycher E."/>
            <person name="Zuo D."/>
            <person name="Mohr S."/>
            <person name="Kane M.F."/>
            <person name="Williamson J."/>
            <person name="Simpson A.J.G."/>
            <person name="Bulyk M.L."/>
            <person name="Harlow E."/>
            <person name="Marsischky G."/>
            <person name="Kolodner R.D."/>
            <person name="LaBaer J."/>
        </authorList>
    </citation>
    <scope>NUCLEOTIDE SEQUENCE [GENOMIC DNA]</scope>
    <source>
        <strain>ATCC 204508 / S288c</strain>
    </source>
</reference>
<reference key="4">
    <citation type="journal article" date="1999" name="Mol. Gen. Genet.">
        <title>Lic4, a nuclear phosphoprotein that cooperates with calcineurin to regulate cation homeostasis in Saccharomyces cerevisiae.</title>
        <authorList>
            <person name="Hemenway C.S."/>
            <person name="Heitman J."/>
        </authorList>
    </citation>
    <scope>FUNCTION</scope>
    <scope>SUBCELLULAR LOCATION</scope>
    <scope>PHOSPHORYLATION</scope>
</reference>
<reference key="5">
    <citation type="journal article" date="2000" name="Microbiology">
        <title>Mutational and hyperexpression-induced disruption of bipolar budding in yeast.</title>
        <authorList>
            <person name="Freedman T."/>
            <person name="Porter A."/>
            <person name="Haarer B."/>
        </authorList>
    </citation>
    <scope>FUNCTION</scope>
</reference>
<reference key="6">
    <citation type="journal article" date="2003" name="Nature">
        <title>Global analysis of protein localization in budding yeast.</title>
        <authorList>
            <person name="Huh W.-K."/>
            <person name="Falvo J.V."/>
            <person name="Gerke L.C."/>
            <person name="Carroll A.S."/>
            <person name="Howson R.W."/>
            <person name="Weissman J.S."/>
            <person name="O'Shea E.K."/>
        </authorList>
    </citation>
    <scope>SUBCELLULAR LOCATION [LARGE SCALE ANALYSIS]</scope>
</reference>
<reference key="7">
    <citation type="journal article" date="2003" name="Nature">
        <title>Global analysis of protein expression in yeast.</title>
        <authorList>
            <person name="Ghaemmaghami S."/>
            <person name="Huh W.-K."/>
            <person name="Bower K."/>
            <person name="Howson R.W."/>
            <person name="Belle A."/>
            <person name="Dephoure N."/>
            <person name="O'Shea E.K."/>
            <person name="Weissman J.S."/>
        </authorList>
    </citation>
    <scope>LEVEL OF PROTEIN EXPRESSION [LARGE SCALE ANALYSIS]</scope>
</reference>
<reference key="8">
    <citation type="journal article" date="2004" name="Biochem. Biophys. Res. Commun.">
        <title>ARL1 participates with ATC1/LIC4 to regulate responses of yeast cells to ions.</title>
        <authorList>
            <person name="Munson A.M."/>
            <person name="Love S.L."/>
            <person name="Shu J."/>
            <person name="Palanivel V.R."/>
            <person name="Rosenwald A.G."/>
        </authorList>
    </citation>
    <scope>FUNCTION</scope>
</reference>
<reference key="9">
    <citation type="journal article" date="2008" name="Mol. Cell. Proteomics">
        <title>A multidimensional chromatography technology for in-depth phosphoproteome analysis.</title>
        <authorList>
            <person name="Albuquerque C.P."/>
            <person name="Smolka M.B."/>
            <person name="Payne S.H."/>
            <person name="Bafna V."/>
            <person name="Eng J."/>
            <person name="Zhou H."/>
        </authorList>
    </citation>
    <scope>IDENTIFICATION BY MASS SPECTROMETRY [LARGE SCALE ANALYSIS]</scope>
</reference>
<gene>
    <name type="primary">ATC1</name>
    <name type="synonym">LIC4</name>
    <name type="ordered locus">YDR184C</name>
    <name type="ORF">YD9395.18c</name>
</gene>
<keyword id="KW-0963">Cytoplasm</keyword>
<keyword id="KW-0539">Nucleus</keyword>
<keyword id="KW-0597">Phosphoprotein</keyword>
<keyword id="KW-1185">Reference proteome</keyword>
<organism>
    <name type="scientific">Saccharomyces cerevisiae (strain ATCC 204508 / S288c)</name>
    <name type="common">Baker's yeast</name>
    <dbReference type="NCBI Taxonomy" id="559292"/>
    <lineage>
        <taxon>Eukaryota</taxon>
        <taxon>Fungi</taxon>
        <taxon>Dikarya</taxon>
        <taxon>Ascomycota</taxon>
        <taxon>Saccharomycotina</taxon>
        <taxon>Saccharomycetes</taxon>
        <taxon>Saccharomycetales</taxon>
        <taxon>Saccharomycetaceae</taxon>
        <taxon>Saccharomyces</taxon>
    </lineage>
</organism>